<name>PCKA_ALISL</name>
<evidence type="ECO:0000255" key="1">
    <source>
        <dbReference type="HAMAP-Rule" id="MF_00453"/>
    </source>
</evidence>
<keyword id="KW-0067">ATP-binding</keyword>
<keyword id="KW-0963">Cytoplasm</keyword>
<keyword id="KW-0210">Decarboxylase</keyword>
<keyword id="KW-0312">Gluconeogenesis</keyword>
<keyword id="KW-0456">Lyase</keyword>
<keyword id="KW-0464">Manganese</keyword>
<keyword id="KW-0479">Metal-binding</keyword>
<keyword id="KW-0547">Nucleotide-binding</keyword>
<reference key="1">
    <citation type="journal article" date="2008" name="BMC Genomics">
        <title>The genome sequence of the fish pathogen Aliivibrio salmonicida strain LFI1238 shows extensive evidence of gene decay.</title>
        <authorList>
            <person name="Hjerde E."/>
            <person name="Lorentzen M.S."/>
            <person name="Holden M.T."/>
            <person name="Seeger K."/>
            <person name="Paulsen S."/>
            <person name="Bason N."/>
            <person name="Churcher C."/>
            <person name="Harris D."/>
            <person name="Norbertczak H."/>
            <person name="Quail M.A."/>
            <person name="Sanders S."/>
            <person name="Thurston S."/>
            <person name="Parkhill J."/>
            <person name="Willassen N.P."/>
            <person name="Thomson N.R."/>
        </authorList>
    </citation>
    <scope>NUCLEOTIDE SEQUENCE [LARGE SCALE GENOMIC DNA]</scope>
    <source>
        <strain>LFI1238</strain>
    </source>
</reference>
<sequence length="541" mass="59684">MTVMEHKKAAQLDLSQHGLSNVTEVLRNPSYDVLFEEETRPDLEGYERGVMTELGSVAVDTGIFTGRSPKDKYIVKDETTKDTLWWSDQGKNDNKAITPAVWDDLKALVTEQLSGKRLFVIDGFCGANPDTRLSVRVITEVAWQAHFVKNMFIRPTDEELESFEPDFVVMNGAKATNPNYEAQGLNSENFVAFNLTERVQIIGGTWYGGEMKKGMFAMMNYLLPLKGIASMHCSANVGKEGDVAVFFGLSGTGKTTLSTDPKRQLIGDDEHGWDDDGIFNFEGGCYAKTIRLSKEAEPDIFNAIRRDALLENVTVRNDGSIDFDDGSKTENTRVSYPIYHIDNIVKPISKAGHANKVIFLTADAFGVLPPVAKLTPEQTKYHFLSGFTAKLAGTERGITEPTPTFSAAFGAAFLTLHPTQYAEVLVKRMEAAGAEAYIVNTGWNGTGKRISIQDTRGIIDAILDGSIDNVETKNIPVFNLEVPTSLPGVDTSILDPRDTYTDPLQWDSKAEDLAQRFIKNFAQYTDNDEGKALVKAGPQLD</sequence>
<comment type="function">
    <text evidence="1">Involved in the gluconeogenesis. Catalyzes the conversion of oxaloacetate (OAA) to phosphoenolpyruvate (PEP) through direct phosphoryl transfer between the nucleoside triphosphate and OAA.</text>
</comment>
<comment type="catalytic activity">
    <reaction evidence="1">
        <text>oxaloacetate + ATP = phosphoenolpyruvate + ADP + CO2</text>
        <dbReference type="Rhea" id="RHEA:18617"/>
        <dbReference type="ChEBI" id="CHEBI:16452"/>
        <dbReference type="ChEBI" id="CHEBI:16526"/>
        <dbReference type="ChEBI" id="CHEBI:30616"/>
        <dbReference type="ChEBI" id="CHEBI:58702"/>
        <dbReference type="ChEBI" id="CHEBI:456216"/>
        <dbReference type="EC" id="4.1.1.49"/>
    </reaction>
</comment>
<comment type="cofactor">
    <cofactor evidence="1">
        <name>Mn(2+)</name>
        <dbReference type="ChEBI" id="CHEBI:29035"/>
    </cofactor>
    <text evidence="1">Binds 1 Mn(2+) ion per subunit.</text>
</comment>
<comment type="pathway">
    <text evidence="1">Carbohydrate biosynthesis; gluconeogenesis.</text>
</comment>
<comment type="subunit">
    <text evidence="1">Monomer.</text>
</comment>
<comment type="subcellular location">
    <subcellularLocation>
        <location evidence="1">Cytoplasm</location>
    </subcellularLocation>
</comment>
<comment type="similarity">
    <text evidence="1">Belongs to the phosphoenolpyruvate carboxykinase (ATP) family.</text>
</comment>
<proteinExistence type="inferred from homology"/>
<gene>
    <name evidence="1" type="primary">pckA</name>
    <name type="ordered locus">VSAL_I2928</name>
</gene>
<dbReference type="EC" id="4.1.1.49" evidence="1"/>
<dbReference type="EMBL" id="FM178379">
    <property type="protein sequence ID" value="CAQ80612.1"/>
    <property type="molecule type" value="Genomic_DNA"/>
</dbReference>
<dbReference type="RefSeq" id="WP_012551345.1">
    <property type="nucleotide sequence ID" value="NC_011312.1"/>
</dbReference>
<dbReference type="SMR" id="B6EGP7"/>
<dbReference type="KEGG" id="vsa:VSAL_I2928"/>
<dbReference type="eggNOG" id="COG1866">
    <property type="taxonomic scope" value="Bacteria"/>
</dbReference>
<dbReference type="HOGENOM" id="CLU_018247_0_1_6"/>
<dbReference type="UniPathway" id="UPA00138"/>
<dbReference type="Proteomes" id="UP000001730">
    <property type="component" value="Chromosome 1"/>
</dbReference>
<dbReference type="GO" id="GO:0005829">
    <property type="term" value="C:cytosol"/>
    <property type="evidence" value="ECO:0007669"/>
    <property type="project" value="TreeGrafter"/>
</dbReference>
<dbReference type="GO" id="GO:0005524">
    <property type="term" value="F:ATP binding"/>
    <property type="evidence" value="ECO:0007669"/>
    <property type="project" value="UniProtKB-UniRule"/>
</dbReference>
<dbReference type="GO" id="GO:0046872">
    <property type="term" value="F:metal ion binding"/>
    <property type="evidence" value="ECO:0007669"/>
    <property type="project" value="UniProtKB-KW"/>
</dbReference>
<dbReference type="GO" id="GO:0004612">
    <property type="term" value="F:phosphoenolpyruvate carboxykinase (ATP) activity"/>
    <property type="evidence" value="ECO:0007669"/>
    <property type="project" value="UniProtKB-UniRule"/>
</dbReference>
<dbReference type="GO" id="GO:0006094">
    <property type="term" value="P:gluconeogenesis"/>
    <property type="evidence" value="ECO:0007669"/>
    <property type="project" value="UniProtKB-UniRule"/>
</dbReference>
<dbReference type="CDD" id="cd00484">
    <property type="entry name" value="PEPCK_ATP"/>
    <property type="match status" value="1"/>
</dbReference>
<dbReference type="FunFam" id="2.170.8.10:FF:000001">
    <property type="entry name" value="Phosphoenolpyruvate carboxykinase (ATP)"/>
    <property type="match status" value="1"/>
</dbReference>
<dbReference type="FunFam" id="3.40.449.10:FF:000001">
    <property type="entry name" value="Phosphoenolpyruvate carboxykinase (ATP)"/>
    <property type="match status" value="1"/>
</dbReference>
<dbReference type="Gene3D" id="3.90.228.20">
    <property type="match status" value="1"/>
</dbReference>
<dbReference type="Gene3D" id="3.40.449.10">
    <property type="entry name" value="Phosphoenolpyruvate Carboxykinase, domain 1"/>
    <property type="match status" value="1"/>
</dbReference>
<dbReference type="Gene3D" id="2.170.8.10">
    <property type="entry name" value="Phosphoenolpyruvate Carboxykinase, domain 2"/>
    <property type="match status" value="1"/>
</dbReference>
<dbReference type="HAMAP" id="MF_00453">
    <property type="entry name" value="PEPCK_ATP"/>
    <property type="match status" value="1"/>
</dbReference>
<dbReference type="InterPro" id="IPR001272">
    <property type="entry name" value="PEP_carboxykinase_ATP"/>
</dbReference>
<dbReference type="InterPro" id="IPR013035">
    <property type="entry name" value="PEP_carboxykinase_C"/>
</dbReference>
<dbReference type="InterPro" id="IPR008210">
    <property type="entry name" value="PEP_carboxykinase_N"/>
</dbReference>
<dbReference type="InterPro" id="IPR015994">
    <property type="entry name" value="PEPCK_ATP_CS"/>
</dbReference>
<dbReference type="NCBIfam" id="TIGR00224">
    <property type="entry name" value="pckA"/>
    <property type="match status" value="1"/>
</dbReference>
<dbReference type="NCBIfam" id="NF006819">
    <property type="entry name" value="PRK09344.1-1"/>
    <property type="match status" value="1"/>
</dbReference>
<dbReference type="NCBIfam" id="NF006820">
    <property type="entry name" value="PRK09344.1-2"/>
    <property type="match status" value="1"/>
</dbReference>
<dbReference type="NCBIfam" id="NF006821">
    <property type="entry name" value="PRK09344.1-3"/>
    <property type="match status" value="1"/>
</dbReference>
<dbReference type="PANTHER" id="PTHR30031:SF0">
    <property type="entry name" value="PHOSPHOENOLPYRUVATE CARBOXYKINASE (ATP)"/>
    <property type="match status" value="1"/>
</dbReference>
<dbReference type="PANTHER" id="PTHR30031">
    <property type="entry name" value="PHOSPHOENOLPYRUVATE CARBOXYKINASE ATP"/>
    <property type="match status" value="1"/>
</dbReference>
<dbReference type="Pfam" id="PF01293">
    <property type="entry name" value="PEPCK_ATP"/>
    <property type="match status" value="1"/>
</dbReference>
<dbReference type="PIRSF" id="PIRSF006294">
    <property type="entry name" value="PEP_crbxkin"/>
    <property type="match status" value="1"/>
</dbReference>
<dbReference type="SUPFAM" id="SSF68923">
    <property type="entry name" value="PEP carboxykinase N-terminal domain"/>
    <property type="match status" value="1"/>
</dbReference>
<dbReference type="SUPFAM" id="SSF53795">
    <property type="entry name" value="PEP carboxykinase-like"/>
    <property type="match status" value="1"/>
</dbReference>
<dbReference type="PROSITE" id="PS00532">
    <property type="entry name" value="PEPCK_ATP"/>
    <property type="match status" value="1"/>
</dbReference>
<feature type="chain" id="PRO_1000125051" description="Phosphoenolpyruvate carboxykinase (ATP)">
    <location>
        <begin position="1"/>
        <end position="541"/>
    </location>
</feature>
<feature type="binding site" evidence="1">
    <location>
        <position position="67"/>
    </location>
    <ligand>
        <name>substrate</name>
    </ligand>
</feature>
<feature type="binding site" evidence="1">
    <location>
        <position position="207"/>
    </location>
    <ligand>
        <name>substrate</name>
    </ligand>
</feature>
<feature type="binding site" evidence="1">
    <location>
        <position position="213"/>
    </location>
    <ligand>
        <name>ATP</name>
        <dbReference type="ChEBI" id="CHEBI:30616"/>
    </ligand>
</feature>
<feature type="binding site" evidence="1">
    <location>
        <position position="213"/>
    </location>
    <ligand>
        <name>Mn(2+)</name>
        <dbReference type="ChEBI" id="CHEBI:29035"/>
    </ligand>
</feature>
<feature type="binding site" evidence="1">
    <location>
        <position position="213"/>
    </location>
    <ligand>
        <name>substrate</name>
    </ligand>
</feature>
<feature type="binding site" evidence="1">
    <location>
        <position position="232"/>
    </location>
    <ligand>
        <name>ATP</name>
        <dbReference type="ChEBI" id="CHEBI:30616"/>
    </ligand>
</feature>
<feature type="binding site" evidence="1">
    <location>
        <position position="232"/>
    </location>
    <ligand>
        <name>Mn(2+)</name>
        <dbReference type="ChEBI" id="CHEBI:29035"/>
    </ligand>
</feature>
<feature type="binding site" evidence="1">
    <location>
        <begin position="248"/>
        <end position="256"/>
    </location>
    <ligand>
        <name>ATP</name>
        <dbReference type="ChEBI" id="CHEBI:30616"/>
    </ligand>
</feature>
<feature type="binding site" evidence="1">
    <location>
        <position position="269"/>
    </location>
    <ligand>
        <name>Mn(2+)</name>
        <dbReference type="ChEBI" id="CHEBI:29035"/>
    </ligand>
</feature>
<feature type="binding site" evidence="1">
    <location>
        <position position="297"/>
    </location>
    <ligand>
        <name>ATP</name>
        <dbReference type="ChEBI" id="CHEBI:30616"/>
    </ligand>
</feature>
<feature type="binding site" evidence="1">
    <location>
        <position position="333"/>
    </location>
    <ligand>
        <name>ATP</name>
        <dbReference type="ChEBI" id="CHEBI:30616"/>
    </ligand>
</feature>
<feature type="binding site" evidence="1">
    <location>
        <position position="333"/>
    </location>
    <ligand>
        <name>substrate</name>
    </ligand>
</feature>
<feature type="binding site" evidence="1">
    <location>
        <begin position="449"/>
        <end position="450"/>
    </location>
    <ligand>
        <name>ATP</name>
        <dbReference type="ChEBI" id="CHEBI:30616"/>
    </ligand>
</feature>
<feature type="binding site" evidence="1">
    <location>
        <position position="455"/>
    </location>
    <ligand>
        <name>ATP</name>
        <dbReference type="ChEBI" id="CHEBI:30616"/>
    </ligand>
</feature>
<organism>
    <name type="scientific">Aliivibrio salmonicida (strain LFI1238)</name>
    <name type="common">Vibrio salmonicida (strain LFI1238)</name>
    <dbReference type="NCBI Taxonomy" id="316275"/>
    <lineage>
        <taxon>Bacteria</taxon>
        <taxon>Pseudomonadati</taxon>
        <taxon>Pseudomonadota</taxon>
        <taxon>Gammaproteobacteria</taxon>
        <taxon>Vibrionales</taxon>
        <taxon>Vibrionaceae</taxon>
        <taxon>Aliivibrio</taxon>
    </lineage>
</organism>
<protein>
    <recommendedName>
        <fullName evidence="1">Phosphoenolpyruvate carboxykinase (ATP)</fullName>
        <shortName evidence="1">PCK</shortName>
        <shortName evidence="1">PEP carboxykinase</shortName>
        <shortName evidence="1">PEPCK</shortName>
        <ecNumber evidence="1">4.1.1.49</ecNumber>
    </recommendedName>
</protein>
<accession>B6EGP7</accession>